<sequence>MSSMTPREIVQELDKHIIGQDSAKRAVAIALRNRWRRMQIDEGLREEVTPKNILMIGPTGVGKTEIARRLAKLADAPFIKVEATKFTEVGYVGRDVESIIRDLADMAIKLLREKEMTKVENRALDAAEERILDALLPPARSFNSDAPVEKESAARQVFRKKLREGTLDDKEIDIEIKATPVGVEIMAPPGMEEMTSQLQSMFSNMSGDRKRTKRMKVAEAMKKVKDEEAAKLVNEEEIKQRALRAVEENGIVFIDEIDKVAKRSETSSADVSREGVQRDLLPLIEGCTVSTKFGMLKTDHILFIASGAFHLAKPSDLIPELQGRLPIRVELDALSPSDFQRILTEPNASLTEQYVALMKTEGVDISFSEGAIQRIAEIAWKVNEKTENIGARRLHTVMEKLLEEVSFAAGDKIRDSFEVTAEYVDKCLGELSEDEDLSRYIL</sequence>
<keyword id="KW-0067">ATP-binding</keyword>
<keyword id="KW-0143">Chaperone</keyword>
<keyword id="KW-0963">Cytoplasm</keyword>
<keyword id="KW-0547">Nucleotide-binding</keyword>
<keyword id="KW-1185">Reference proteome</keyword>
<keyword id="KW-0346">Stress response</keyword>
<name>HSLU_HAHCH</name>
<feature type="chain" id="PRO_1000119108" description="ATP-dependent protease ATPase subunit HslU">
    <location>
        <begin position="1"/>
        <end position="442"/>
    </location>
</feature>
<feature type="binding site" evidence="1">
    <location>
        <position position="18"/>
    </location>
    <ligand>
        <name>ATP</name>
        <dbReference type="ChEBI" id="CHEBI:30616"/>
    </ligand>
</feature>
<feature type="binding site" evidence="1">
    <location>
        <begin position="60"/>
        <end position="65"/>
    </location>
    <ligand>
        <name>ATP</name>
        <dbReference type="ChEBI" id="CHEBI:30616"/>
    </ligand>
</feature>
<feature type="binding site" evidence="1">
    <location>
        <position position="255"/>
    </location>
    <ligand>
        <name>ATP</name>
        <dbReference type="ChEBI" id="CHEBI:30616"/>
    </ligand>
</feature>
<feature type="binding site" evidence="1">
    <location>
        <position position="320"/>
    </location>
    <ligand>
        <name>ATP</name>
        <dbReference type="ChEBI" id="CHEBI:30616"/>
    </ligand>
</feature>
<feature type="binding site" evidence="1">
    <location>
        <position position="392"/>
    </location>
    <ligand>
        <name>ATP</name>
        <dbReference type="ChEBI" id="CHEBI:30616"/>
    </ligand>
</feature>
<comment type="function">
    <text evidence="1">ATPase subunit of a proteasome-like degradation complex; this subunit has chaperone activity. The binding of ATP and its subsequent hydrolysis by HslU are essential for unfolding of protein substrates subsequently hydrolyzed by HslV. HslU recognizes the N-terminal part of its protein substrates and unfolds these before they are guided to HslV for hydrolysis.</text>
</comment>
<comment type="subunit">
    <text evidence="1">A double ring-shaped homohexamer of HslV is capped on each side by a ring-shaped HslU homohexamer. The assembly of the HslU/HslV complex is dependent on binding of ATP.</text>
</comment>
<comment type="subcellular location">
    <subcellularLocation>
        <location evidence="1">Cytoplasm</location>
    </subcellularLocation>
</comment>
<comment type="similarity">
    <text evidence="1">Belongs to the ClpX chaperone family. HslU subfamily.</text>
</comment>
<evidence type="ECO:0000255" key="1">
    <source>
        <dbReference type="HAMAP-Rule" id="MF_00249"/>
    </source>
</evidence>
<proteinExistence type="inferred from homology"/>
<dbReference type="EMBL" id="CP000155">
    <property type="protein sequence ID" value="ABC32631.1"/>
    <property type="molecule type" value="Genomic_DNA"/>
</dbReference>
<dbReference type="RefSeq" id="WP_011399689.1">
    <property type="nucleotide sequence ID" value="NC_007645.1"/>
</dbReference>
<dbReference type="SMR" id="Q2S9P3"/>
<dbReference type="STRING" id="349521.HCH_05980"/>
<dbReference type="KEGG" id="hch:HCH_05980"/>
<dbReference type="eggNOG" id="COG1220">
    <property type="taxonomic scope" value="Bacteria"/>
</dbReference>
<dbReference type="HOGENOM" id="CLU_033123_0_0_6"/>
<dbReference type="OrthoDB" id="9804062at2"/>
<dbReference type="Proteomes" id="UP000000238">
    <property type="component" value="Chromosome"/>
</dbReference>
<dbReference type="GO" id="GO:0009376">
    <property type="term" value="C:HslUV protease complex"/>
    <property type="evidence" value="ECO:0007669"/>
    <property type="project" value="UniProtKB-UniRule"/>
</dbReference>
<dbReference type="GO" id="GO:0005524">
    <property type="term" value="F:ATP binding"/>
    <property type="evidence" value="ECO:0007669"/>
    <property type="project" value="UniProtKB-UniRule"/>
</dbReference>
<dbReference type="GO" id="GO:0016887">
    <property type="term" value="F:ATP hydrolysis activity"/>
    <property type="evidence" value="ECO:0007669"/>
    <property type="project" value="InterPro"/>
</dbReference>
<dbReference type="GO" id="GO:0008233">
    <property type="term" value="F:peptidase activity"/>
    <property type="evidence" value="ECO:0007669"/>
    <property type="project" value="InterPro"/>
</dbReference>
<dbReference type="GO" id="GO:0036402">
    <property type="term" value="F:proteasome-activating activity"/>
    <property type="evidence" value="ECO:0007669"/>
    <property type="project" value="UniProtKB-UniRule"/>
</dbReference>
<dbReference type="GO" id="GO:0043335">
    <property type="term" value="P:protein unfolding"/>
    <property type="evidence" value="ECO:0007669"/>
    <property type="project" value="UniProtKB-UniRule"/>
</dbReference>
<dbReference type="GO" id="GO:0051603">
    <property type="term" value="P:proteolysis involved in protein catabolic process"/>
    <property type="evidence" value="ECO:0007669"/>
    <property type="project" value="TreeGrafter"/>
</dbReference>
<dbReference type="CDD" id="cd19498">
    <property type="entry name" value="RecA-like_HslU"/>
    <property type="match status" value="1"/>
</dbReference>
<dbReference type="FunFam" id="1.10.8.10:FF:000028">
    <property type="entry name" value="ATP-dependent protease ATPase subunit HslU"/>
    <property type="match status" value="1"/>
</dbReference>
<dbReference type="FunFam" id="3.40.50.300:FF:000213">
    <property type="entry name" value="ATP-dependent protease ATPase subunit HslU"/>
    <property type="match status" value="1"/>
</dbReference>
<dbReference type="FunFam" id="3.40.50.300:FF:000220">
    <property type="entry name" value="ATP-dependent protease ATPase subunit HslU"/>
    <property type="match status" value="1"/>
</dbReference>
<dbReference type="Gene3D" id="1.10.8.60">
    <property type="match status" value="1"/>
</dbReference>
<dbReference type="Gene3D" id="1.10.8.10">
    <property type="entry name" value="DNA helicase RuvA subunit, C-terminal domain"/>
    <property type="match status" value="1"/>
</dbReference>
<dbReference type="Gene3D" id="3.40.50.300">
    <property type="entry name" value="P-loop containing nucleotide triphosphate hydrolases"/>
    <property type="match status" value="2"/>
</dbReference>
<dbReference type="HAMAP" id="MF_00249">
    <property type="entry name" value="HslU"/>
    <property type="match status" value="1"/>
</dbReference>
<dbReference type="InterPro" id="IPR003593">
    <property type="entry name" value="AAA+_ATPase"/>
</dbReference>
<dbReference type="InterPro" id="IPR050052">
    <property type="entry name" value="ATP-dep_Clp_protease_ClpX"/>
</dbReference>
<dbReference type="InterPro" id="IPR003959">
    <property type="entry name" value="ATPase_AAA_core"/>
</dbReference>
<dbReference type="InterPro" id="IPR019489">
    <property type="entry name" value="Clp_ATPase_C"/>
</dbReference>
<dbReference type="InterPro" id="IPR004491">
    <property type="entry name" value="HslU"/>
</dbReference>
<dbReference type="InterPro" id="IPR027417">
    <property type="entry name" value="P-loop_NTPase"/>
</dbReference>
<dbReference type="NCBIfam" id="TIGR00390">
    <property type="entry name" value="hslU"/>
    <property type="match status" value="1"/>
</dbReference>
<dbReference type="NCBIfam" id="NF003544">
    <property type="entry name" value="PRK05201.1"/>
    <property type="match status" value="1"/>
</dbReference>
<dbReference type="PANTHER" id="PTHR48102">
    <property type="entry name" value="ATP-DEPENDENT CLP PROTEASE ATP-BINDING SUBUNIT CLPX-LIKE, MITOCHONDRIAL-RELATED"/>
    <property type="match status" value="1"/>
</dbReference>
<dbReference type="PANTHER" id="PTHR48102:SF3">
    <property type="entry name" value="ATP-DEPENDENT PROTEASE ATPASE SUBUNIT HSLU"/>
    <property type="match status" value="1"/>
</dbReference>
<dbReference type="Pfam" id="PF00004">
    <property type="entry name" value="AAA"/>
    <property type="match status" value="1"/>
</dbReference>
<dbReference type="Pfam" id="PF07724">
    <property type="entry name" value="AAA_2"/>
    <property type="match status" value="1"/>
</dbReference>
<dbReference type="SMART" id="SM00382">
    <property type="entry name" value="AAA"/>
    <property type="match status" value="1"/>
</dbReference>
<dbReference type="SMART" id="SM01086">
    <property type="entry name" value="ClpB_D2-small"/>
    <property type="match status" value="1"/>
</dbReference>
<dbReference type="SUPFAM" id="SSF52540">
    <property type="entry name" value="P-loop containing nucleoside triphosphate hydrolases"/>
    <property type="match status" value="1"/>
</dbReference>
<gene>
    <name evidence="1" type="primary">hslU</name>
    <name type="ordered locus">HCH_05980</name>
</gene>
<protein>
    <recommendedName>
        <fullName evidence="1">ATP-dependent protease ATPase subunit HslU</fullName>
    </recommendedName>
    <alternativeName>
        <fullName evidence="1">Unfoldase HslU</fullName>
    </alternativeName>
</protein>
<reference key="1">
    <citation type="journal article" date="2005" name="Nucleic Acids Res.">
        <title>Genomic blueprint of Hahella chejuensis, a marine microbe producing an algicidal agent.</title>
        <authorList>
            <person name="Jeong H."/>
            <person name="Yim J.H."/>
            <person name="Lee C."/>
            <person name="Choi S.-H."/>
            <person name="Park Y.K."/>
            <person name="Yoon S.H."/>
            <person name="Hur C.-G."/>
            <person name="Kang H.-Y."/>
            <person name="Kim D."/>
            <person name="Lee H.H."/>
            <person name="Park K.H."/>
            <person name="Park S.-H."/>
            <person name="Park H.-S."/>
            <person name="Lee H.K."/>
            <person name="Oh T.K."/>
            <person name="Kim J.F."/>
        </authorList>
    </citation>
    <scope>NUCLEOTIDE SEQUENCE [LARGE SCALE GENOMIC DNA]</scope>
    <source>
        <strain>KCTC 2396</strain>
    </source>
</reference>
<organism>
    <name type="scientific">Hahella chejuensis (strain KCTC 2396)</name>
    <dbReference type="NCBI Taxonomy" id="349521"/>
    <lineage>
        <taxon>Bacteria</taxon>
        <taxon>Pseudomonadati</taxon>
        <taxon>Pseudomonadota</taxon>
        <taxon>Gammaproteobacteria</taxon>
        <taxon>Oceanospirillales</taxon>
        <taxon>Hahellaceae</taxon>
        <taxon>Hahella</taxon>
    </lineage>
</organism>
<accession>Q2S9P3</accession>